<accession>Q39R76</accession>
<sequence length="404" mass="44283">MSGEKRYLTAGLPGTGGTIKETADDFVVEEIPLYLPCGEGEHVYALIEKRGVTTLDAIRRLARALKLSERDVGYAGMKDARGVTRQTVSLPRMKPEEVLALELPGIRILSAERHRNKLKLGHLAGNRFRIRVRGVVSDAVARAEAILAVLERRGVPNRFGEQRYGAQGNSHLIGRAMLAGDWCAAVDLLMGDPAKVTGEAWRSAIEAYQRGELEESQRLFPGHCRTERDVIQRLVKRPDDFEGAFRAVNPRLRKLYLSACQSALFDHVVEARLDSLDTVQEGDLAWKHANGACFLVTDPAAEAPRAEHFEISPTGPLFGCRMMMPEGEEGALERSLLAAEGVEPASFDLPGGLRMEGERRPLRVPLGDPRASADADGLVLEFSLPKGSYATAVLREVMKGGRPD</sequence>
<organism>
    <name type="scientific">Geobacter metallireducens (strain ATCC 53774 / DSM 7210 / GS-15)</name>
    <dbReference type="NCBI Taxonomy" id="269799"/>
    <lineage>
        <taxon>Bacteria</taxon>
        <taxon>Pseudomonadati</taxon>
        <taxon>Thermodesulfobacteriota</taxon>
        <taxon>Desulfuromonadia</taxon>
        <taxon>Geobacterales</taxon>
        <taxon>Geobacteraceae</taxon>
        <taxon>Geobacter</taxon>
    </lineage>
</organism>
<keyword id="KW-0413">Isomerase</keyword>
<keyword id="KW-1185">Reference proteome</keyword>
<keyword id="KW-0819">tRNA processing</keyword>
<reference key="1">
    <citation type="journal article" date="2009" name="BMC Microbiol.">
        <title>The genome sequence of Geobacter metallireducens: features of metabolism, physiology and regulation common and dissimilar to Geobacter sulfurreducens.</title>
        <authorList>
            <person name="Aklujkar M."/>
            <person name="Krushkal J."/>
            <person name="DiBartolo G."/>
            <person name="Lapidus A."/>
            <person name="Land M.L."/>
            <person name="Lovley D.R."/>
        </authorList>
    </citation>
    <scope>NUCLEOTIDE SEQUENCE [LARGE SCALE GENOMIC DNA]</scope>
    <source>
        <strain>ATCC 53774 / DSM 7210 / GS-15</strain>
    </source>
</reference>
<proteinExistence type="inferred from homology"/>
<gene>
    <name evidence="1" type="primary">truD</name>
    <name type="ordered locus">Gmet_3033</name>
</gene>
<name>TRUD_GEOMG</name>
<evidence type="ECO:0000255" key="1">
    <source>
        <dbReference type="HAMAP-Rule" id="MF_01082"/>
    </source>
</evidence>
<dbReference type="EC" id="5.4.99.27" evidence="1"/>
<dbReference type="EMBL" id="CP000148">
    <property type="protein sequence ID" value="ABB33248.1"/>
    <property type="molecule type" value="Genomic_DNA"/>
</dbReference>
<dbReference type="RefSeq" id="WP_004514347.1">
    <property type="nucleotide sequence ID" value="NC_007517.1"/>
</dbReference>
<dbReference type="SMR" id="Q39R76"/>
<dbReference type="STRING" id="269799.Gmet_3033"/>
<dbReference type="KEGG" id="gme:Gmet_3033"/>
<dbReference type="eggNOG" id="COG0585">
    <property type="taxonomic scope" value="Bacteria"/>
</dbReference>
<dbReference type="HOGENOM" id="CLU_005281_4_0_7"/>
<dbReference type="Proteomes" id="UP000007073">
    <property type="component" value="Chromosome"/>
</dbReference>
<dbReference type="GO" id="GO:0005829">
    <property type="term" value="C:cytosol"/>
    <property type="evidence" value="ECO:0007669"/>
    <property type="project" value="TreeGrafter"/>
</dbReference>
<dbReference type="GO" id="GO:0003723">
    <property type="term" value="F:RNA binding"/>
    <property type="evidence" value="ECO:0007669"/>
    <property type="project" value="InterPro"/>
</dbReference>
<dbReference type="GO" id="GO:0160150">
    <property type="term" value="F:tRNA pseudouridine(13) synthase activity"/>
    <property type="evidence" value="ECO:0007669"/>
    <property type="project" value="UniProtKB-EC"/>
</dbReference>
<dbReference type="GO" id="GO:0031119">
    <property type="term" value="P:tRNA pseudouridine synthesis"/>
    <property type="evidence" value="ECO:0007669"/>
    <property type="project" value="UniProtKB-UniRule"/>
</dbReference>
<dbReference type="Gene3D" id="1.10.1510.30">
    <property type="match status" value="1"/>
</dbReference>
<dbReference type="Gene3D" id="3.30.70.3160">
    <property type="match status" value="1"/>
</dbReference>
<dbReference type="Gene3D" id="3.30.2350.20">
    <property type="entry name" value="TruD, catalytic domain"/>
    <property type="match status" value="1"/>
</dbReference>
<dbReference type="HAMAP" id="MF_01082">
    <property type="entry name" value="TruD"/>
    <property type="match status" value="1"/>
</dbReference>
<dbReference type="InterPro" id="IPR020103">
    <property type="entry name" value="PsdUridine_synth_cat_dom_sf"/>
</dbReference>
<dbReference type="InterPro" id="IPR001656">
    <property type="entry name" value="PsdUridine_synth_TruD"/>
</dbReference>
<dbReference type="InterPro" id="IPR020119">
    <property type="entry name" value="PsdUridine_synth_TruD_CS"/>
</dbReference>
<dbReference type="InterPro" id="IPR011760">
    <property type="entry name" value="PsdUridine_synth_TruD_insert"/>
</dbReference>
<dbReference type="InterPro" id="IPR042214">
    <property type="entry name" value="TruD_catalytic"/>
</dbReference>
<dbReference type="InterPro" id="IPR050170">
    <property type="entry name" value="TruD_pseudoU_synthase"/>
</dbReference>
<dbReference type="NCBIfam" id="TIGR00094">
    <property type="entry name" value="tRNA_TruD_broad"/>
    <property type="match status" value="1"/>
</dbReference>
<dbReference type="PANTHER" id="PTHR47811">
    <property type="entry name" value="TRNA PSEUDOURIDINE SYNTHASE D"/>
    <property type="match status" value="1"/>
</dbReference>
<dbReference type="PANTHER" id="PTHR47811:SF1">
    <property type="entry name" value="TRNA PSEUDOURIDINE SYNTHASE D"/>
    <property type="match status" value="1"/>
</dbReference>
<dbReference type="Pfam" id="PF01142">
    <property type="entry name" value="TruD"/>
    <property type="match status" value="1"/>
</dbReference>
<dbReference type="PIRSF" id="PIRSF037016">
    <property type="entry name" value="Pseudouridin_synth_euk_prd"/>
    <property type="match status" value="1"/>
</dbReference>
<dbReference type="SUPFAM" id="SSF55120">
    <property type="entry name" value="Pseudouridine synthase"/>
    <property type="match status" value="1"/>
</dbReference>
<dbReference type="PROSITE" id="PS50984">
    <property type="entry name" value="TRUD"/>
    <property type="match status" value="1"/>
</dbReference>
<dbReference type="PROSITE" id="PS01268">
    <property type="entry name" value="UPF0024"/>
    <property type="match status" value="1"/>
</dbReference>
<comment type="function">
    <text evidence="1">Responsible for synthesis of pseudouridine from uracil-13 in transfer RNAs.</text>
</comment>
<comment type="catalytic activity">
    <reaction evidence="1">
        <text>uridine(13) in tRNA = pseudouridine(13) in tRNA</text>
        <dbReference type="Rhea" id="RHEA:42540"/>
        <dbReference type="Rhea" id="RHEA-COMP:10105"/>
        <dbReference type="Rhea" id="RHEA-COMP:10106"/>
        <dbReference type="ChEBI" id="CHEBI:65314"/>
        <dbReference type="ChEBI" id="CHEBI:65315"/>
        <dbReference type="EC" id="5.4.99.27"/>
    </reaction>
</comment>
<comment type="similarity">
    <text evidence="1">Belongs to the pseudouridine synthase TruD family.</text>
</comment>
<protein>
    <recommendedName>
        <fullName evidence="1">tRNA pseudouridine synthase D</fullName>
        <ecNumber evidence="1">5.4.99.27</ecNumber>
    </recommendedName>
    <alternativeName>
        <fullName evidence="1">tRNA pseudouridine(13) synthase</fullName>
    </alternativeName>
    <alternativeName>
        <fullName evidence="1">tRNA pseudouridylate synthase D</fullName>
    </alternativeName>
    <alternativeName>
        <fullName evidence="1">tRNA-uridine isomerase D</fullName>
    </alternativeName>
</protein>
<feature type="chain" id="PRO_0000230140" description="tRNA pseudouridine synthase D">
    <location>
        <begin position="1"/>
        <end position="404"/>
    </location>
</feature>
<feature type="domain" description="TRUD" evidence="1">
    <location>
        <begin position="154"/>
        <end position="364"/>
    </location>
</feature>
<feature type="active site" description="Nucleophile" evidence="1">
    <location>
        <position position="79"/>
    </location>
</feature>